<sequence>MRYNQFSYIPTSLERAAEELKELGFDLDLQKTAKANLESFLRKLFFHYPDSDYPLSHLIAKNDMDALSFFQSEQELSKEVFDLLALQVLGFIPGVDFTEADAFLDKLAFPIHFDETEIIKHIHHLLATRCKSGMTLIDDLVSQGMLTMDNDYHFFNGKSLATFDTSQLIREVVYVEAPLDTDQDGQLDLIKVNIIRPQSQKPLPTLMTPSPYHQGINEVANDKKLYRMEKELVVKKRRQITVEDRDFIPLETQPCKLPIGQNLESFSYINSYSLNDYFLARGFANIYVSGVGTAGSTGFMTSGDYAQIESFKAVIDWLNGRATAYTSHSKTHQVRADWANGLVCTTGKSYLGTMSTGLATTGVDGLAMIIAESAISSWYNYYRENGLVCSPGGYPGEDLDVLTELTYSRNLLAGDYLRHNDRYQELLNQQSQALDRQSGDYNQFWHDRNYLKNAHQIKCDVVYTHGLQDWNVKPRQVYEIFNALPSTINKHLFLHQGEHVYMHNRQSIDFRESMNALLCQKLLGLANDFSLPEMIWQDNTCPQNWQERKVFGTSTIKELDLGQELLLIDNHYGEDEFKAYGKDFRAFKAALFEGKANQALVDILLEEDLPINGEIVLQLKVKSSENKGLLSAQILDYGKKKRLGDLPIALTQSSIDNGQNFSRESLKELPFREDSYRVISKGFMNLQNRNNLSSIETIPNNKWMTVRLPLQPTIYHLEKGDTLRVILYTTDFEHTVRDNSNYALTIDLSQSQLIVPIASN</sequence>
<dbReference type="EC" id="3.4.14.11" evidence="1"/>
<dbReference type="EMBL" id="CP000262">
    <property type="protein sequence ID" value="ABF38585.1"/>
    <property type="molecule type" value="Genomic_DNA"/>
</dbReference>
<dbReference type="SMR" id="Q1J501"/>
<dbReference type="ESTHER" id="strpy-PEPXP">
    <property type="family name" value="Lactobacillus_peptidase"/>
</dbReference>
<dbReference type="KEGG" id="spi:MGAS10750_Spy1635"/>
<dbReference type="HOGENOM" id="CLU_011800_0_0_9"/>
<dbReference type="Proteomes" id="UP000002434">
    <property type="component" value="Chromosome"/>
</dbReference>
<dbReference type="GO" id="GO:0005737">
    <property type="term" value="C:cytoplasm"/>
    <property type="evidence" value="ECO:0007669"/>
    <property type="project" value="UniProtKB-SubCell"/>
</dbReference>
<dbReference type="GO" id="GO:0004177">
    <property type="term" value="F:aminopeptidase activity"/>
    <property type="evidence" value="ECO:0007669"/>
    <property type="project" value="UniProtKB-KW"/>
</dbReference>
<dbReference type="GO" id="GO:0008239">
    <property type="term" value="F:dipeptidyl-peptidase activity"/>
    <property type="evidence" value="ECO:0007669"/>
    <property type="project" value="UniProtKB-UniRule"/>
</dbReference>
<dbReference type="GO" id="GO:0008236">
    <property type="term" value="F:serine-type peptidase activity"/>
    <property type="evidence" value="ECO:0007669"/>
    <property type="project" value="UniProtKB-KW"/>
</dbReference>
<dbReference type="GO" id="GO:0006508">
    <property type="term" value="P:proteolysis"/>
    <property type="evidence" value="ECO:0007669"/>
    <property type="project" value="UniProtKB-KW"/>
</dbReference>
<dbReference type="Gene3D" id="1.10.246.70">
    <property type="match status" value="1"/>
</dbReference>
<dbReference type="Gene3D" id="3.40.50.1820">
    <property type="entry name" value="alpha/beta hydrolase"/>
    <property type="match status" value="1"/>
</dbReference>
<dbReference type="Gene3D" id="2.60.120.260">
    <property type="entry name" value="Galactose-binding domain-like"/>
    <property type="match status" value="1"/>
</dbReference>
<dbReference type="HAMAP" id="MF_00698">
    <property type="entry name" value="Aminopeptidase_S15"/>
    <property type="match status" value="1"/>
</dbReference>
<dbReference type="InterPro" id="IPR029058">
    <property type="entry name" value="AB_hydrolase_fold"/>
</dbReference>
<dbReference type="InterPro" id="IPR008979">
    <property type="entry name" value="Galactose-bd-like_sf"/>
</dbReference>
<dbReference type="InterPro" id="IPR008252">
    <property type="entry name" value="Pept_S15_Xpro"/>
</dbReference>
<dbReference type="InterPro" id="IPR015251">
    <property type="entry name" value="PepX_N_dom"/>
</dbReference>
<dbReference type="InterPro" id="IPR036313">
    <property type="entry name" value="PepX_N_dom_sf"/>
</dbReference>
<dbReference type="InterPro" id="IPR000383">
    <property type="entry name" value="Xaa-Pro-like_dom"/>
</dbReference>
<dbReference type="InterPro" id="IPR013736">
    <property type="entry name" value="Xaa-Pro_dipept_C"/>
</dbReference>
<dbReference type="InterPro" id="IPR050585">
    <property type="entry name" value="Xaa-Pro_dipeptidyl-ppase/CocE"/>
</dbReference>
<dbReference type="NCBIfam" id="NF003783">
    <property type="entry name" value="PRK05371.1-4"/>
    <property type="match status" value="1"/>
</dbReference>
<dbReference type="PANTHER" id="PTHR43056:SF10">
    <property type="entry name" value="COCE_NOND FAMILY, PUTATIVE (AFU_ORTHOLOGUE AFUA_7G00600)-RELATED"/>
    <property type="match status" value="1"/>
</dbReference>
<dbReference type="PANTHER" id="PTHR43056">
    <property type="entry name" value="PEPTIDASE S9 PROLYL OLIGOPEPTIDASE"/>
    <property type="match status" value="1"/>
</dbReference>
<dbReference type="Pfam" id="PF02129">
    <property type="entry name" value="Peptidase_S15"/>
    <property type="match status" value="1"/>
</dbReference>
<dbReference type="Pfam" id="PF08530">
    <property type="entry name" value="PepX_C"/>
    <property type="match status" value="1"/>
</dbReference>
<dbReference type="Pfam" id="PF09168">
    <property type="entry name" value="PepX_N"/>
    <property type="match status" value="1"/>
</dbReference>
<dbReference type="PRINTS" id="PR00923">
    <property type="entry name" value="LACTOPTASE"/>
</dbReference>
<dbReference type="SMART" id="SM00939">
    <property type="entry name" value="PepX_C"/>
    <property type="match status" value="1"/>
</dbReference>
<dbReference type="SMART" id="SM00940">
    <property type="entry name" value="PepX_N"/>
    <property type="match status" value="1"/>
</dbReference>
<dbReference type="SUPFAM" id="SSF53474">
    <property type="entry name" value="alpha/beta-Hydrolases"/>
    <property type="match status" value="1"/>
</dbReference>
<dbReference type="SUPFAM" id="SSF49785">
    <property type="entry name" value="Galactose-binding domain-like"/>
    <property type="match status" value="1"/>
</dbReference>
<dbReference type="SUPFAM" id="SSF81761">
    <property type="entry name" value="X-Prolyl dipeptidyl aminopeptidase PepX, N-terminal domain"/>
    <property type="match status" value="1"/>
</dbReference>
<accession>Q1J501</accession>
<comment type="function">
    <text evidence="1">Removes N-terminal dipeptides sequentially from polypeptides having unsubstituted N-termini provided that the penultimate residue is proline.</text>
</comment>
<comment type="catalytic activity">
    <reaction evidence="1">
        <text>Hydrolyzes Xaa-Pro-|- bonds to release unblocked, N-terminal dipeptides from substrates including Ala-Pro-|-p-nitroanilide and (sequentially) Tyr-Pro-|-Phe-Pro-|-Gly-Pro-|-Ile.</text>
        <dbReference type="EC" id="3.4.14.11"/>
    </reaction>
</comment>
<comment type="subunit">
    <text evidence="1">Homodimer.</text>
</comment>
<comment type="subcellular location">
    <subcellularLocation>
        <location evidence="1">Cytoplasm</location>
    </subcellularLocation>
</comment>
<comment type="similarity">
    <text evidence="1">Belongs to the peptidase S15 family.</text>
</comment>
<reference key="1">
    <citation type="journal article" date="2006" name="Proc. Natl. Acad. Sci. U.S.A.">
        <title>Molecular genetic anatomy of inter- and intraserotype variation in the human bacterial pathogen group A Streptococcus.</title>
        <authorList>
            <person name="Beres S.B."/>
            <person name="Richter E.W."/>
            <person name="Nagiec M.J."/>
            <person name="Sumby P."/>
            <person name="Porcella S.F."/>
            <person name="DeLeo F.R."/>
            <person name="Musser J.M."/>
        </authorList>
    </citation>
    <scope>NUCLEOTIDE SEQUENCE [LARGE SCALE GENOMIC DNA]</scope>
    <source>
        <strain>MGAS10750</strain>
    </source>
</reference>
<keyword id="KW-0031">Aminopeptidase</keyword>
<keyword id="KW-0963">Cytoplasm</keyword>
<keyword id="KW-0378">Hydrolase</keyword>
<keyword id="KW-0645">Protease</keyword>
<keyword id="KW-0720">Serine protease</keyword>
<evidence type="ECO:0000255" key="1">
    <source>
        <dbReference type="HAMAP-Rule" id="MF_00698"/>
    </source>
</evidence>
<organism>
    <name type="scientific">Streptococcus pyogenes serotype M4 (strain MGAS10750)</name>
    <dbReference type="NCBI Taxonomy" id="370554"/>
    <lineage>
        <taxon>Bacteria</taxon>
        <taxon>Bacillati</taxon>
        <taxon>Bacillota</taxon>
        <taxon>Bacilli</taxon>
        <taxon>Lactobacillales</taxon>
        <taxon>Streptococcaceae</taxon>
        <taxon>Streptococcus</taxon>
    </lineage>
</organism>
<gene>
    <name evidence="1" type="primary">pepX</name>
    <name type="ordered locus">MGAS10750_Spy1635</name>
</gene>
<feature type="chain" id="PRO_1000045491" description="Xaa-Pro dipeptidyl-peptidase">
    <location>
        <begin position="1"/>
        <end position="760"/>
    </location>
</feature>
<feature type="active site" description="Charge relay system" evidence="1">
    <location>
        <position position="349"/>
    </location>
</feature>
<feature type="active site" description="Charge relay system" evidence="1">
    <location>
        <position position="469"/>
    </location>
</feature>
<feature type="active site" description="Charge relay system" evidence="1">
    <location>
        <position position="499"/>
    </location>
</feature>
<protein>
    <recommendedName>
        <fullName evidence="1">Xaa-Pro dipeptidyl-peptidase</fullName>
        <ecNumber evidence="1">3.4.14.11</ecNumber>
    </recommendedName>
    <alternativeName>
        <fullName evidence="1">X-Pro dipeptidyl-peptidase</fullName>
    </alternativeName>
    <alternativeName>
        <fullName evidence="1">X-prolyl-dipeptidyl aminopeptidase</fullName>
        <shortName evidence="1">X-PDAP</shortName>
    </alternativeName>
</protein>
<proteinExistence type="inferred from homology"/>
<name>PEPX_STRPF</name>